<organism>
    <name type="scientific">Burkholderia pseudomallei (strain K96243)</name>
    <dbReference type="NCBI Taxonomy" id="272560"/>
    <lineage>
        <taxon>Bacteria</taxon>
        <taxon>Pseudomonadati</taxon>
        <taxon>Pseudomonadota</taxon>
        <taxon>Betaproteobacteria</taxon>
        <taxon>Burkholderiales</taxon>
        <taxon>Burkholderiaceae</taxon>
        <taxon>Burkholderia</taxon>
        <taxon>pseudomallei group</taxon>
    </lineage>
</organism>
<keyword id="KW-0028">Amino-acid biosynthesis</keyword>
<keyword id="KW-0963">Cytoplasm</keyword>
<keyword id="KW-0554">One-carbon metabolism</keyword>
<keyword id="KW-0663">Pyridoxal phosphate</keyword>
<keyword id="KW-1185">Reference proteome</keyword>
<keyword id="KW-0808">Transferase</keyword>
<protein>
    <recommendedName>
        <fullName evidence="1">Serine hydroxymethyltransferase 2</fullName>
        <shortName evidence="1">SHMT 2</shortName>
        <shortName evidence="1">Serine methylase 2</shortName>
        <ecNumber evidence="1">2.1.2.1</ecNumber>
    </recommendedName>
</protein>
<dbReference type="EC" id="2.1.2.1" evidence="1"/>
<dbReference type="EMBL" id="BX571966">
    <property type="protein sequence ID" value="CAH38004.1"/>
    <property type="status" value="ALT_INIT"/>
    <property type="molecule type" value="Genomic_DNA"/>
</dbReference>
<dbReference type="RefSeq" id="WP_004523136.1">
    <property type="nucleotide sequence ID" value="NZ_CP009537.1"/>
</dbReference>
<dbReference type="RefSeq" id="YP_110568.1">
    <property type="nucleotide sequence ID" value="NC_006351.1"/>
</dbReference>
<dbReference type="SMR" id="Q63MV1"/>
<dbReference type="STRING" id="272560.BPSS0547"/>
<dbReference type="KEGG" id="bps:BPSS0547"/>
<dbReference type="PATRIC" id="fig|272560.51.peg.6715"/>
<dbReference type="eggNOG" id="COG0112">
    <property type="taxonomic scope" value="Bacteria"/>
</dbReference>
<dbReference type="UniPathway" id="UPA00193"/>
<dbReference type="UniPathway" id="UPA00288">
    <property type="reaction ID" value="UER01023"/>
</dbReference>
<dbReference type="Proteomes" id="UP000000605">
    <property type="component" value="Chromosome 2"/>
</dbReference>
<dbReference type="GO" id="GO:0005829">
    <property type="term" value="C:cytosol"/>
    <property type="evidence" value="ECO:0007669"/>
    <property type="project" value="TreeGrafter"/>
</dbReference>
<dbReference type="GO" id="GO:0004372">
    <property type="term" value="F:glycine hydroxymethyltransferase activity"/>
    <property type="evidence" value="ECO:0007669"/>
    <property type="project" value="UniProtKB-UniRule"/>
</dbReference>
<dbReference type="GO" id="GO:0030170">
    <property type="term" value="F:pyridoxal phosphate binding"/>
    <property type="evidence" value="ECO:0007669"/>
    <property type="project" value="UniProtKB-UniRule"/>
</dbReference>
<dbReference type="GO" id="GO:0019264">
    <property type="term" value="P:glycine biosynthetic process from serine"/>
    <property type="evidence" value="ECO:0007669"/>
    <property type="project" value="UniProtKB-UniRule"/>
</dbReference>
<dbReference type="GO" id="GO:0035999">
    <property type="term" value="P:tetrahydrofolate interconversion"/>
    <property type="evidence" value="ECO:0007669"/>
    <property type="project" value="UniProtKB-UniRule"/>
</dbReference>
<dbReference type="CDD" id="cd00378">
    <property type="entry name" value="SHMT"/>
    <property type="match status" value="1"/>
</dbReference>
<dbReference type="FunFam" id="3.40.640.10:FF:000001">
    <property type="entry name" value="Serine hydroxymethyltransferase"/>
    <property type="match status" value="1"/>
</dbReference>
<dbReference type="Gene3D" id="3.90.1150.10">
    <property type="entry name" value="Aspartate Aminotransferase, domain 1"/>
    <property type="match status" value="1"/>
</dbReference>
<dbReference type="Gene3D" id="3.40.640.10">
    <property type="entry name" value="Type I PLP-dependent aspartate aminotransferase-like (Major domain)"/>
    <property type="match status" value="1"/>
</dbReference>
<dbReference type="HAMAP" id="MF_00051">
    <property type="entry name" value="SHMT"/>
    <property type="match status" value="1"/>
</dbReference>
<dbReference type="InterPro" id="IPR015424">
    <property type="entry name" value="PyrdxlP-dep_Trfase"/>
</dbReference>
<dbReference type="InterPro" id="IPR015421">
    <property type="entry name" value="PyrdxlP-dep_Trfase_major"/>
</dbReference>
<dbReference type="InterPro" id="IPR015422">
    <property type="entry name" value="PyrdxlP-dep_Trfase_small"/>
</dbReference>
<dbReference type="InterPro" id="IPR001085">
    <property type="entry name" value="Ser_HO-MeTrfase"/>
</dbReference>
<dbReference type="InterPro" id="IPR049943">
    <property type="entry name" value="Ser_HO-MeTrfase-like"/>
</dbReference>
<dbReference type="InterPro" id="IPR019798">
    <property type="entry name" value="Ser_HO-MeTrfase_PLP_BS"/>
</dbReference>
<dbReference type="InterPro" id="IPR039429">
    <property type="entry name" value="SHMT-like_dom"/>
</dbReference>
<dbReference type="NCBIfam" id="NF000586">
    <property type="entry name" value="PRK00011.1"/>
    <property type="match status" value="1"/>
</dbReference>
<dbReference type="PANTHER" id="PTHR11680">
    <property type="entry name" value="SERINE HYDROXYMETHYLTRANSFERASE"/>
    <property type="match status" value="1"/>
</dbReference>
<dbReference type="PANTHER" id="PTHR11680:SF35">
    <property type="entry name" value="SERINE HYDROXYMETHYLTRANSFERASE 1"/>
    <property type="match status" value="1"/>
</dbReference>
<dbReference type="Pfam" id="PF00464">
    <property type="entry name" value="SHMT"/>
    <property type="match status" value="1"/>
</dbReference>
<dbReference type="PIRSF" id="PIRSF000412">
    <property type="entry name" value="SHMT"/>
    <property type="match status" value="1"/>
</dbReference>
<dbReference type="SUPFAM" id="SSF53383">
    <property type="entry name" value="PLP-dependent transferases"/>
    <property type="match status" value="1"/>
</dbReference>
<dbReference type="PROSITE" id="PS00096">
    <property type="entry name" value="SHMT"/>
    <property type="match status" value="1"/>
</dbReference>
<gene>
    <name evidence="1" type="primary">glyA2</name>
    <name type="ordered locus">BPSS0547</name>
</gene>
<name>GLYA2_BURPS</name>
<sequence length="424" mass="45441">MSNANPFFSQSLAERDASVRGAILKELERQQSQVELIASENIVSRAVLDAQGSVLTNKYAEGYPGKRYYGGCEFADEVEALAIERVKRLFNAGHANVQPHSGAQANGAVMLALAKPGDTVLGMSLDAGGHLTHGAKPALSGKWFNALQYGVSRDTMLIDYDQVEALAQQHKPSLIIAGFSAYPRKLDFARFRAIADSVGAKLMVDMAHIAGVIAAGRHANPVEHAHVVTSTTHKTLRGPRGGFVLTNDEEIAKKINSAVFPGLQGGPLMHVIAGKAVAFGEALTDDFKTYIDRVLANAQALGDVLKAGGVDLVTGGTDNHLLLVDLRPKGLKGAQVEQALERAGITCNKNGIPFDPEKPTITSGIRLGTPAGTTRGFGAAEFREVGRLILEVFEALRTNPEGDHATEQRVRREIFALCERFPIY</sequence>
<accession>Q63MV1</accession>
<reference key="1">
    <citation type="journal article" date="2004" name="Proc. Natl. Acad. Sci. U.S.A.">
        <title>Genomic plasticity of the causative agent of melioidosis, Burkholderia pseudomallei.</title>
        <authorList>
            <person name="Holden M.T.G."/>
            <person name="Titball R.W."/>
            <person name="Peacock S.J."/>
            <person name="Cerdeno-Tarraga A.-M."/>
            <person name="Atkins T."/>
            <person name="Crossman L.C."/>
            <person name="Pitt T."/>
            <person name="Churcher C."/>
            <person name="Mungall K.L."/>
            <person name="Bentley S.D."/>
            <person name="Sebaihia M."/>
            <person name="Thomson N.R."/>
            <person name="Bason N."/>
            <person name="Beacham I.R."/>
            <person name="Brooks K."/>
            <person name="Brown K.A."/>
            <person name="Brown N.F."/>
            <person name="Challis G.L."/>
            <person name="Cherevach I."/>
            <person name="Chillingworth T."/>
            <person name="Cronin A."/>
            <person name="Crossett B."/>
            <person name="Davis P."/>
            <person name="DeShazer D."/>
            <person name="Feltwell T."/>
            <person name="Fraser A."/>
            <person name="Hance Z."/>
            <person name="Hauser H."/>
            <person name="Holroyd S."/>
            <person name="Jagels K."/>
            <person name="Keith K.E."/>
            <person name="Maddison M."/>
            <person name="Moule S."/>
            <person name="Price C."/>
            <person name="Quail M.A."/>
            <person name="Rabbinowitsch E."/>
            <person name="Rutherford K."/>
            <person name="Sanders M."/>
            <person name="Simmonds M."/>
            <person name="Songsivilai S."/>
            <person name="Stevens K."/>
            <person name="Tumapa S."/>
            <person name="Vesaratchavest M."/>
            <person name="Whitehead S."/>
            <person name="Yeats C."/>
            <person name="Barrell B.G."/>
            <person name="Oyston P.C.F."/>
            <person name="Parkhill J."/>
        </authorList>
    </citation>
    <scope>NUCLEOTIDE SEQUENCE [LARGE SCALE GENOMIC DNA]</scope>
    <source>
        <strain>K96243</strain>
    </source>
</reference>
<feature type="chain" id="PRO_0000113553" description="Serine hydroxymethyltransferase 2">
    <location>
        <begin position="1"/>
        <end position="424"/>
    </location>
</feature>
<feature type="binding site" evidence="1">
    <location>
        <position position="125"/>
    </location>
    <ligand>
        <name>(6S)-5,6,7,8-tetrahydrofolate</name>
        <dbReference type="ChEBI" id="CHEBI:57453"/>
    </ligand>
</feature>
<feature type="binding site" evidence="1">
    <location>
        <begin position="129"/>
        <end position="131"/>
    </location>
    <ligand>
        <name>(6S)-5,6,7,8-tetrahydrofolate</name>
        <dbReference type="ChEBI" id="CHEBI:57453"/>
    </ligand>
</feature>
<feature type="binding site" evidence="1">
    <location>
        <position position="250"/>
    </location>
    <ligand>
        <name>(6S)-5,6,7,8-tetrahydrofolate</name>
        <dbReference type="ChEBI" id="CHEBI:57453"/>
    </ligand>
</feature>
<feature type="site" description="Plays an important role in substrate specificity" evidence="1">
    <location>
        <position position="233"/>
    </location>
</feature>
<feature type="modified residue" description="N6-(pyridoxal phosphate)lysine" evidence="1">
    <location>
        <position position="234"/>
    </location>
</feature>
<proteinExistence type="inferred from homology"/>
<comment type="function">
    <text evidence="1">Catalyzes the reversible interconversion of serine and glycine with tetrahydrofolate (THF) serving as the one-carbon carrier. This reaction serves as the major source of one-carbon groups required for the biosynthesis of purines, thymidylate, methionine, and other important biomolecules. Also exhibits THF-independent aldolase activity toward beta-hydroxyamino acids, producing glycine and aldehydes, via a retro-aldol mechanism.</text>
</comment>
<comment type="catalytic activity">
    <reaction evidence="1">
        <text>(6R)-5,10-methylene-5,6,7,8-tetrahydrofolate + glycine + H2O = (6S)-5,6,7,8-tetrahydrofolate + L-serine</text>
        <dbReference type="Rhea" id="RHEA:15481"/>
        <dbReference type="ChEBI" id="CHEBI:15377"/>
        <dbReference type="ChEBI" id="CHEBI:15636"/>
        <dbReference type="ChEBI" id="CHEBI:33384"/>
        <dbReference type="ChEBI" id="CHEBI:57305"/>
        <dbReference type="ChEBI" id="CHEBI:57453"/>
        <dbReference type="EC" id="2.1.2.1"/>
    </reaction>
</comment>
<comment type="cofactor">
    <cofactor evidence="1">
        <name>pyridoxal 5'-phosphate</name>
        <dbReference type="ChEBI" id="CHEBI:597326"/>
    </cofactor>
</comment>
<comment type="pathway">
    <text evidence="1">One-carbon metabolism; tetrahydrofolate interconversion.</text>
</comment>
<comment type="pathway">
    <text evidence="1">Amino-acid biosynthesis; glycine biosynthesis; glycine from L-serine: step 1/1.</text>
</comment>
<comment type="subunit">
    <text evidence="1">Homodimer.</text>
</comment>
<comment type="subcellular location">
    <subcellularLocation>
        <location evidence="1">Cytoplasm</location>
    </subcellularLocation>
</comment>
<comment type="similarity">
    <text evidence="1">Belongs to the SHMT family.</text>
</comment>
<comment type="sequence caution" evidence="2">
    <conflict type="erroneous initiation">
        <sequence resource="EMBL-CDS" id="CAH38004"/>
    </conflict>
</comment>
<evidence type="ECO:0000255" key="1">
    <source>
        <dbReference type="HAMAP-Rule" id="MF_00051"/>
    </source>
</evidence>
<evidence type="ECO:0000305" key="2"/>